<gene>
    <name type="primary">NSRP1</name>
    <name type="synonym">CCDC55</name>
    <name type="synonym">NSRP70</name>
</gene>
<feature type="chain" id="PRO_0000240434" description="Nuclear speckle splicing regulatory protein 1">
    <location>
        <begin position="1"/>
        <end position="558"/>
    </location>
</feature>
<feature type="region of interest" description="Disordered" evidence="3">
    <location>
        <begin position="21"/>
        <end position="54"/>
    </location>
</feature>
<feature type="region of interest" description="Necessary for alternative splicing activity">
    <location>
        <begin position="106"/>
        <end position="170"/>
    </location>
</feature>
<feature type="region of interest" description="Disordered" evidence="3">
    <location>
        <begin position="204"/>
        <end position="534"/>
    </location>
</feature>
<feature type="coiled-coil region" evidence="2">
    <location>
        <begin position="104"/>
        <end position="170"/>
    </location>
</feature>
<feature type="coiled-coil region" evidence="2">
    <location>
        <begin position="379"/>
        <end position="427"/>
    </location>
</feature>
<feature type="compositionally biased region" description="Basic and acidic residues" evidence="3">
    <location>
        <begin position="204"/>
        <end position="215"/>
    </location>
</feature>
<feature type="compositionally biased region" description="Polar residues" evidence="3">
    <location>
        <begin position="216"/>
        <end position="226"/>
    </location>
</feature>
<feature type="compositionally biased region" description="Basic and acidic residues" evidence="3">
    <location>
        <begin position="250"/>
        <end position="280"/>
    </location>
</feature>
<feature type="compositionally biased region" description="Basic residues" evidence="3">
    <location>
        <begin position="299"/>
        <end position="310"/>
    </location>
</feature>
<feature type="compositionally biased region" description="Basic and acidic residues" evidence="3">
    <location>
        <begin position="311"/>
        <end position="442"/>
    </location>
</feature>
<feature type="compositionally biased region" description="Basic and acidic residues" evidence="3">
    <location>
        <begin position="449"/>
        <end position="487"/>
    </location>
</feature>
<feature type="compositionally biased region" description="Basic and acidic residues" evidence="3">
    <location>
        <begin position="501"/>
        <end position="517"/>
    </location>
</feature>
<feature type="modified residue" description="Phosphoserine" evidence="13">
    <location>
        <position position="27"/>
    </location>
</feature>
<feature type="modified residue" description="Phosphoserine" evidence="8 9 10 12 13 14 15">
    <location>
        <position position="33"/>
    </location>
</feature>
<feature type="modified residue" description="Phosphoserine" evidence="8 10 11 12 13 14 15">
    <location>
        <position position="248"/>
    </location>
</feature>
<feature type="modified residue" description="Phosphoserine" evidence="10 11 13">
    <location>
        <position position="254"/>
    </location>
</feature>
<feature type="modified residue" description="Phosphoserine" evidence="10 11 13">
    <location>
        <position position="255"/>
    </location>
</feature>
<feature type="modified residue" description="Phosphothreonine" evidence="7 14">
    <location>
        <position position="275"/>
    </location>
</feature>
<feature type="modified residue" description="Phosphoserine" evidence="1">
    <location>
        <position position="457"/>
    </location>
</feature>
<feature type="cross-link" description="Glycyl lysine isopeptide (Lys-Gly) (interchain with G-Cter in SUMO2)" evidence="17">
    <location>
        <position position="199"/>
    </location>
</feature>
<feature type="cross-link" description="Glycyl lysine isopeptide (Lys-Gly) (interchain with G-Cter in SUMO2)" evidence="16">
    <location>
        <position position="210"/>
    </location>
</feature>
<feature type="cross-link" description="Glycyl lysine isopeptide (Lys-Gly) (interchain with G-Cter in SUMO2)" evidence="17">
    <location>
        <position position="281"/>
    </location>
</feature>
<feature type="sequence variant" id="VAR_087656" description="In NEDSSBA." evidence="5">
    <location>
        <begin position="18"/>
        <end position="558"/>
    </location>
</feature>
<feature type="sequence variant" id="VAR_054104" description="In dbSNP:rs11544945.">
    <original>K</original>
    <variation>T</variation>
    <location>
        <position position="86"/>
    </location>
</feature>
<feature type="mutagenesis site" description="Inhibits nuclear localization and alternative splicing activity." evidence="4">
    <original>RD</original>
    <variation>AA</variation>
    <location>
        <begin position="536"/>
        <end position="537"/>
    </location>
</feature>
<feature type="sequence conflict" description="In Ref. 1; CAG38586." evidence="6" ref="1">
    <original>E</original>
    <variation>G</variation>
    <location>
        <position position="270"/>
    </location>
</feature>
<protein>
    <recommendedName>
        <fullName>Nuclear speckle splicing regulatory protein 1</fullName>
    </recommendedName>
    <alternativeName>
        <fullName>Coiled-coil domain-containing protein 55</fullName>
    </alternativeName>
    <alternativeName>
        <fullName>Nuclear speckle-related protein 70</fullName>
        <shortName>NSrp70</shortName>
    </alternativeName>
</protein>
<keyword id="KW-0175">Coiled coil</keyword>
<keyword id="KW-0225">Disease variant</keyword>
<keyword id="KW-0887">Epilepsy</keyword>
<keyword id="KW-0991">Intellectual disability</keyword>
<keyword id="KW-1017">Isopeptide bond</keyword>
<keyword id="KW-0507">mRNA processing</keyword>
<keyword id="KW-0508">mRNA splicing</keyword>
<keyword id="KW-0539">Nucleus</keyword>
<keyword id="KW-0597">Phosphoprotein</keyword>
<keyword id="KW-1267">Proteomics identification</keyword>
<keyword id="KW-1185">Reference proteome</keyword>
<keyword id="KW-0694">RNA-binding</keyword>
<keyword id="KW-0832">Ubl conjugation</keyword>
<dbReference type="EMBL" id="AL136806">
    <property type="protein sequence ID" value="CAB66740.1"/>
    <property type="molecule type" value="mRNA"/>
</dbReference>
<dbReference type="EMBL" id="CR533555">
    <property type="protein sequence ID" value="CAG38586.1"/>
    <property type="molecule type" value="mRNA"/>
</dbReference>
<dbReference type="EMBL" id="AC104984">
    <property type="status" value="NOT_ANNOTATED_CDS"/>
    <property type="molecule type" value="Genomic_DNA"/>
</dbReference>
<dbReference type="EMBL" id="BC040118">
    <property type="protein sequence ID" value="AAH40118.1"/>
    <property type="molecule type" value="mRNA"/>
</dbReference>
<dbReference type="EMBL" id="BC105044">
    <property type="protein sequence ID" value="AAI05045.1"/>
    <property type="molecule type" value="mRNA"/>
</dbReference>
<dbReference type="EMBL" id="BC105046">
    <property type="protein sequence ID" value="AAI05047.1"/>
    <property type="molecule type" value="mRNA"/>
</dbReference>
<dbReference type="CCDS" id="CCDS11255.1"/>
<dbReference type="RefSeq" id="NP_001248396.1">
    <property type="nucleotide sequence ID" value="NM_001261467.1"/>
</dbReference>
<dbReference type="RefSeq" id="NP_115517.1">
    <property type="nucleotide sequence ID" value="NM_032141.4"/>
</dbReference>
<dbReference type="SMR" id="Q9H0G5"/>
<dbReference type="BioGRID" id="123876">
    <property type="interactions" value="210"/>
</dbReference>
<dbReference type="FunCoup" id="Q9H0G5">
    <property type="interactions" value="2641"/>
</dbReference>
<dbReference type="IntAct" id="Q9H0G5">
    <property type="interactions" value="70"/>
</dbReference>
<dbReference type="MINT" id="Q9H0G5"/>
<dbReference type="STRING" id="9606.ENSP00000247026"/>
<dbReference type="GlyGen" id="Q9H0G5">
    <property type="glycosylation" value="1 site, 1 O-linked glycan (1 site)"/>
</dbReference>
<dbReference type="iPTMnet" id="Q9H0G5"/>
<dbReference type="PhosphoSitePlus" id="Q9H0G5"/>
<dbReference type="BioMuta" id="NSRP1"/>
<dbReference type="DMDM" id="74733524"/>
<dbReference type="jPOST" id="Q9H0G5"/>
<dbReference type="MassIVE" id="Q9H0G5"/>
<dbReference type="PaxDb" id="9606-ENSP00000247026"/>
<dbReference type="PeptideAtlas" id="Q9H0G5"/>
<dbReference type="ProteomicsDB" id="80276"/>
<dbReference type="Pumba" id="Q9H0G5"/>
<dbReference type="Antibodypedia" id="2855">
    <property type="antibodies" value="109 antibodies from 24 providers"/>
</dbReference>
<dbReference type="DNASU" id="84081"/>
<dbReference type="Ensembl" id="ENST00000247026.10">
    <property type="protein sequence ID" value="ENSP00000247026.5"/>
    <property type="gene ID" value="ENSG00000126653.18"/>
</dbReference>
<dbReference type="GeneID" id="84081"/>
<dbReference type="KEGG" id="hsa:84081"/>
<dbReference type="MANE-Select" id="ENST00000247026.10">
    <property type="protein sequence ID" value="ENSP00000247026.5"/>
    <property type="RefSeq nucleotide sequence ID" value="NM_032141.4"/>
    <property type="RefSeq protein sequence ID" value="NP_115517.1"/>
</dbReference>
<dbReference type="UCSC" id="uc002heu.5">
    <property type="organism name" value="human"/>
</dbReference>
<dbReference type="AGR" id="HGNC:25305"/>
<dbReference type="CTD" id="84081"/>
<dbReference type="DisGeNET" id="84081"/>
<dbReference type="GeneCards" id="NSRP1"/>
<dbReference type="HGNC" id="HGNC:25305">
    <property type="gene designation" value="NSRP1"/>
</dbReference>
<dbReference type="HPA" id="ENSG00000126653">
    <property type="expression patterns" value="Low tissue specificity"/>
</dbReference>
<dbReference type="MalaCards" id="NSRP1"/>
<dbReference type="MIM" id="616173">
    <property type="type" value="gene"/>
</dbReference>
<dbReference type="MIM" id="620001">
    <property type="type" value="phenotype"/>
</dbReference>
<dbReference type="neXtProt" id="NX_Q9H0G5"/>
<dbReference type="OpenTargets" id="ENSG00000126653"/>
<dbReference type="PharmGKB" id="PA142672171"/>
<dbReference type="VEuPathDB" id="HostDB:ENSG00000126653"/>
<dbReference type="eggNOG" id="KOG2117">
    <property type="taxonomic scope" value="Eukaryota"/>
</dbReference>
<dbReference type="GeneTree" id="ENSGT00940000154049"/>
<dbReference type="HOGENOM" id="CLU_548527_0_0_1"/>
<dbReference type="InParanoid" id="Q9H0G5"/>
<dbReference type="OMA" id="QSRDHEN"/>
<dbReference type="OrthoDB" id="446635at2759"/>
<dbReference type="PAN-GO" id="Q9H0G5">
    <property type="GO annotations" value="0 GO annotations based on evolutionary models"/>
</dbReference>
<dbReference type="PhylomeDB" id="Q9H0G5"/>
<dbReference type="TreeFam" id="TF319359"/>
<dbReference type="PathwayCommons" id="Q9H0G5"/>
<dbReference type="Reactome" id="R-HSA-72163">
    <property type="pathway name" value="mRNA Splicing - Major Pathway"/>
</dbReference>
<dbReference type="SignaLink" id="Q9H0G5"/>
<dbReference type="BioGRID-ORCS" id="84081">
    <property type="hits" value="138 hits in 1156 CRISPR screens"/>
</dbReference>
<dbReference type="CD-CODE" id="804901D1">
    <property type="entry name" value="Nuclear speckle"/>
</dbReference>
<dbReference type="ChiTaRS" id="NSRP1">
    <property type="organism name" value="human"/>
</dbReference>
<dbReference type="GeneWiki" id="CCDC55_(gene)"/>
<dbReference type="GenomeRNAi" id="84081"/>
<dbReference type="Pharos" id="Q9H0G5">
    <property type="development level" value="Tbio"/>
</dbReference>
<dbReference type="PRO" id="PR:Q9H0G5"/>
<dbReference type="Proteomes" id="UP000005640">
    <property type="component" value="Chromosome 17"/>
</dbReference>
<dbReference type="RNAct" id="Q9H0G5">
    <property type="molecule type" value="protein"/>
</dbReference>
<dbReference type="Bgee" id="ENSG00000126653">
    <property type="expression patterns" value="Expressed in sural nerve and 187 other cell types or tissues"/>
</dbReference>
<dbReference type="ExpressionAtlas" id="Q9H0G5">
    <property type="expression patterns" value="baseline and differential"/>
</dbReference>
<dbReference type="GO" id="GO:0016607">
    <property type="term" value="C:nuclear speck"/>
    <property type="evidence" value="ECO:0000314"/>
    <property type="project" value="UniProtKB"/>
</dbReference>
<dbReference type="GO" id="GO:0005654">
    <property type="term" value="C:nucleoplasm"/>
    <property type="evidence" value="ECO:0000314"/>
    <property type="project" value="HPA"/>
</dbReference>
<dbReference type="GO" id="GO:0005634">
    <property type="term" value="C:nucleus"/>
    <property type="evidence" value="ECO:0000314"/>
    <property type="project" value="UniProtKB"/>
</dbReference>
<dbReference type="GO" id="GO:1990904">
    <property type="term" value="C:ribonucleoprotein complex"/>
    <property type="evidence" value="ECO:0000314"/>
    <property type="project" value="UniProtKB"/>
</dbReference>
<dbReference type="GO" id="GO:0003729">
    <property type="term" value="F:mRNA binding"/>
    <property type="evidence" value="ECO:0000314"/>
    <property type="project" value="UniProtKB"/>
</dbReference>
<dbReference type="GO" id="GO:0003723">
    <property type="term" value="F:RNA binding"/>
    <property type="evidence" value="ECO:0007005"/>
    <property type="project" value="UniProtKB"/>
</dbReference>
<dbReference type="GO" id="GO:0032502">
    <property type="term" value="P:developmental process"/>
    <property type="evidence" value="ECO:0000315"/>
    <property type="project" value="UniProtKB"/>
</dbReference>
<dbReference type="GO" id="GO:0001701">
    <property type="term" value="P:in utero embryonic development"/>
    <property type="evidence" value="ECO:0007669"/>
    <property type="project" value="Ensembl"/>
</dbReference>
<dbReference type="GO" id="GO:0006397">
    <property type="term" value="P:mRNA processing"/>
    <property type="evidence" value="ECO:0007669"/>
    <property type="project" value="UniProtKB-KW"/>
</dbReference>
<dbReference type="GO" id="GO:0000381">
    <property type="term" value="P:regulation of alternative mRNA splicing, via spliceosome"/>
    <property type="evidence" value="ECO:0000314"/>
    <property type="project" value="UniProtKB"/>
</dbReference>
<dbReference type="GO" id="GO:0008380">
    <property type="term" value="P:RNA splicing"/>
    <property type="evidence" value="ECO:0007669"/>
    <property type="project" value="UniProtKB-KW"/>
</dbReference>
<dbReference type="InterPro" id="IPR046850">
    <property type="entry name" value="NRP1_C"/>
</dbReference>
<dbReference type="InterPro" id="IPR042816">
    <property type="entry name" value="Nsrp1"/>
</dbReference>
<dbReference type="InterPro" id="IPR018612">
    <property type="entry name" value="NSRP1_N"/>
</dbReference>
<dbReference type="PANTHER" id="PTHR31938">
    <property type="entry name" value="NUCLEAR SPECKLE SPLICING REGULATORY PROTEIN 1"/>
    <property type="match status" value="1"/>
</dbReference>
<dbReference type="PANTHER" id="PTHR31938:SF4">
    <property type="entry name" value="NUCLEAR SPECKLE SPLICING REGULATORY PROTEIN 1"/>
    <property type="match status" value="1"/>
</dbReference>
<dbReference type="Pfam" id="PF20427">
    <property type="entry name" value="NRP1_C"/>
    <property type="match status" value="1"/>
</dbReference>
<dbReference type="Pfam" id="PF09745">
    <property type="entry name" value="NSRP1_N"/>
    <property type="match status" value="1"/>
</dbReference>
<accession>Q9H0G5</accession>
<accession>Q6FI71</accession>
<organism>
    <name type="scientific">Homo sapiens</name>
    <name type="common">Human</name>
    <dbReference type="NCBI Taxonomy" id="9606"/>
    <lineage>
        <taxon>Eukaryota</taxon>
        <taxon>Metazoa</taxon>
        <taxon>Chordata</taxon>
        <taxon>Craniata</taxon>
        <taxon>Vertebrata</taxon>
        <taxon>Euteleostomi</taxon>
        <taxon>Mammalia</taxon>
        <taxon>Eutheria</taxon>
        <taxon>Euarchontoglires</taxon>
        <taxon>Primates</taxon>
        <taxon>Haplorrhini</taxon>
        <taxon>Catarrhini</taxon>
        <taxon>Hominidae</taxon>
        <taxon>Homo</taxon>
    </lineage>
</organism>
<sequence>MAIPGRQYGLILPKKTQQLHPVLQKPSVFGNDSDDDDETSVSESLQREAAKKQAMKQTKLEIQKALAEDATVYEYDSIYDEMQKKKEENNPKLLLGKDRKPKYIHNLLKAVEIRKKEQEKRMEKKIQREREMEKGEFDDKEAFVTSAYKKKLQERAEEEEREKRAAALEACLDVTKQKDLSGFYRHLLNQAVGEEEVPKCSFREARSGIKEEKSRGFSNEVSSKNRIPQEKCILQTDVKVEENPDADSDFDAKSSADDEIEETRVNCRREKVIETPENDFKHHRSQNHSRSPSEERGHSTRHHTKGSRTSRGHEKREDQHQQKQSRDQENHYTDRDYRKERDSHRHREASHRDSHWKRHEQEDKPRARDQRERSDRVWKREKDREKYSQREQERDRQQNDQNRPSEKGEKEEKSKAKEEHMKVRKERYENNDKYRDREKREVGVQSSERNQDRKESSPNSRAKDKFLDQERSNKMRNMAKDKERNQEKPSNSESSLGAKHRLTEEGQEKGKEQERPPEAVSKFAKRNNEETVMSARDRYLARQMARVNAKTYIEKEDD</sequence>
<name>NSRP1_HUMAN</name>
<reference key="1">
    <citation type="journal article" date="2001" name="Genome Res.">
        <title>Towards a catalog of human genes and proteins: sequencing and analysis of 500 novel complete protein coding human cDNAs.</title>
        <authorList>
            <person name="Wiemann S."/>
            <person name="Weil B."/>
            <person name="Wellenreuther R."/>
            <person name="Gassenhuber J."/>
            <person name="Glassl S."/>
            <person name="Ansorge W."/>
            <person name="Boecher M."/>
            <person name="Bloecker H."/>
            <person name="Bauersachs S."/>
            <person name="Blum H."/>
            <person name="Lauber J."/>
            <person name="Duesterhoeft A."/>
            <person name="Beyer A."/>
            <person name="Koehrer K."/>
            <person name="Strack N."/>
            <person name="Mewes H.-W."/>
            <person name="Ottenwaelder B."/>
            <person name="Obermaier B."/>
            <person name="Tampe J."/>
            <person name="Heubner D."/>
            <person name="Wambutt R."/>
            <person name="Korn B."/>
            <person name="Klein M."/>
            <person name="Poustka A."/>
        </authorList>
    </citation>
    <scope>NUCLEOTIDE SEQUENCE [LARGE SCALE MRNA]</scope>
    <source>
        <tissue>Testis</tissue>
    </source>
</reference>
<reference key="2">
    <citation type="journal article" date="2004" name="Genome Res.">
        <title>The status, quality, and expansion of the NIH full-length cDNA project: the Mammalian Gene Collection (MGC).</title>
        <authorList>
            <consortium name="The MGC Project Team"/>
        </authorList>
    </citation>
    <scope>NUCLEOTIDE SEQUENCE [LARGE SCALE MRNA]</scope>
    <source>
        <tissue>Brain</tissue>
    </source>
</reference>
<reference key="3">
    <citation type="journal article" date="2006" name="Nature">
        <title>DNA sequence of human chromosome 17 and analysis of rearrangement in the human lineage.</title>
        <authorList>
            <person name="Zody M.C."/>
            <person name="Garber M."/>
            <person name="Adams D.J."/>
            <person name="Sharpe T."/>
            <person name="Harrow J."/>
            <person name="Lupski J.R."/>
            <person name="Nicholson C."/>
            <person name="Searle S.M."/>
            <person name="Wilming L."/>
            <person name="Young S.K."/>
            <person name="Abouelleil A."/>
            <person name="Allen N.R."/>
            <person name="Bi W."/>
            <person name="Bloom T."/>
            <person name="Borowsky M.L."/>
            <person name="Bugalter B.E."/>
            <person name="Butler J."/>
            <person name="Chang J.L."/>
            <person name="Chen C.-K."/>
            <person name="Cook A."/>
            <person name="Corum B."/>
            <person name="Cuomo C.A."/>
            <person name="de Jong P.J."/>
            <person name="DeCaprio D."/>
            <person name="Dewar K."/>
            <person name="FitzGerald M."/>
            <person name="Gilbert J."/>
            <person name="Gibson R."/>
            <person name="Gnerre S."/>
            <person name="Goldstein S."/>
            <person name="Grafham D.V."/>
            <person name="Grocock R."/>
            <person name="Hafez N."/>
            <person name="Hagopian D.S."/>
            <person name="Hart E."/>
            <person name="Norman C.H."/>
            <person name="Humphray S."/>
            <person name="Jaffe D.B."/>
            <person name="Jones M."/>
            <person name="Kamal M."/>
            <person name="Khodiyar V.K."/>
            <person name="LaButti K."/>
            <person name="Laird G."/>
            <person name="Lehoczky J."/>
            <person name="Liu X."/>
            <person name="Lokyitsang T."/>
            <person name="Loveland J."/>
            <person name="Lui A."/>
            <person name="Macdonald P."/>
            <person name="Major J.E."/>
            <person name="Matthews L."/>
            <person name="Mauceli E."/>
            <person name="McCarroll S.A."/>
            <person name="Mihalev A.H."/>
            <person name="Mudge J."/>
            <person name="Nguyen C."/>
            <person name="Nicol R."/>
            <person name="O'Leary S.B."/>
            <person name="Osoegawa K."/>
            <person name="Schwartz D.C."/>
            <person name="Shaw-Smith C."/>
            <person name="Stankiewicz P."/>
            <person name="Steward C."/>
            <person name="Swarbreck D."/>
            <person name="Venkataraman V."/>
            <person name="Whittaker C.A."/>
            <person name="Yang X."/>
            <person name="Zimmer A.R."/>
            <person name="Bradley A."/>
            <person name="Hubbard T."/>
            <person name="Birren B.W."/>
            <person name="Rogers J."/>
            <person name="Lander E.S."/>
            <person name="Nusbaum C."/>
        </authorList>
    </citation>
    <scope>NUCLEOTIDE SEQUENCE [LARGE SCALE GENOMIC DNA]</scope>
</reference>
<reference key="4">
    <citation type="journal article" date="2006" name="Cell">
        <title>Global, in vivo, and site-specific phosphorylation dynamics in signaling networks.</title>
        <authorList>
            <person name="Olsen J.V."/>
            <person name="Blagoev B."/>
            <person name="Gnad F."/>
            <person name="Macek B."/>
            <person name="Kumar C."/>
            <person name="Mortensen P."/>
            <person name="Mann M."/>
        </authorList>
    </citation>
    <scope>PHOSPHORYLATION [LARGE SCALE ANALYSIS] AT SER-33 AND SER-248</scope>
    <scope>IDENTIFICATION BY MASS SPECTROMETRY [LARGE SCALE ANALYSIS]</scope>
    <source>
        <tissue>Cervix carcinoma</tissue>
    </source>
</reference>
<reference key="5">
    <citation type="journal article" date="2006" name="Nat. Biotechnol.">
        <title>A probability-based approach for high-throughput protein phosphorylation analysis and site localization.</title>
        <authorList>
            <person name="Beausoleil S.A."/>
            <person name="Villen J."/>
            <person name="Gerber S.A."/>
            <person name="Rush J."/>
            <person name="Gygi S.P."/>
        </authorList>
    </citation>
    <scope>PHOSPHORYLATION [LARGE SCALE ANALYSIS] AT THR-275</scope>
    <scope>IDENTIFICATION BY MASS SPECTROMETRY [LARGE SCALE ANALYSIS]</scope>
    <source>
        <tissue>Cervix carcinoma</tissue>
    </source>
</reference>
<reference key="6">
    <citation type="journal article" date="2008" name="J. Proteome Res.">
        <title>Combining protein-based IMAC, peptide-based IMAC, and MudPIT for efficient phosphoproteomic analysis.</title>
        <authorList>
            <person name="Cantin G.T."/>
            <person name="Yi W."/>
            <person name="Lu B."/>
            <person name="Park S.K."/>
            <person name="Xu T."/>
            <person name="Lee J.-D."/>
            <person name="Yates J.R. III"/>
        </authorList>
    </citation>
    <scope>PHOSPHORYLATION [LARGE SCALE ANALYSIS] AT SER-33</scope>
    <scope>IDENTIFICATION BY MASS SPECTROMETRY [LARGE SCALE ANALYSIS]</scope>
    <source>
        <tissue>Cervix carcinoma</tissue>
    </source>
</reference>
<reference key="7">
    <citation type="journal article" date="2008" name="Proc. Natl. Acad. Sci. U.S.A.">
        <title>A quantitative atlas of mitotic phosphorylation.</title>
        <authorList>
            <person name="Dephoure N."/>
            <person name="Zhou C."/>
            <person name="Villen J."/>
            <person name="Beausoleil S.A."/>
            <person name="Bakalarski C.E."/>
            <person name="Elledge S.J."/>
            <person name="Gygi S.P."/>
        </authorList>
    </citation>
    <scope>PHOSPHORYLATION [LARGE SCALE ANALYSIS] AT SER-33; SER-248; SER-254 AND SER-255</scope>
    <scope>IDENTIFICATION BY MASS SPECTROMETRY [LARGE SCALE ANALYSIS]</scope>
    <source>
        <tissue>Cervix carcinoma</tissue>
    </source>
</reference>
<reference key="8">
    <citation type="journal article" date="2009" name="Anal. Chem.">
        <title>Lys-N and trypsin cover complementary parts of the phosphoproteome in a refined SCX-based approach.</title>
        <authorList>
            <person name="Gauci S."/>
            <person name="Helbig A.O."/>
            <person name="Slijper M."/>
            <person name="Krijgsveld J."/>
            <person name="Heck A.J."/>
            <person name="Mohammed S."/>
        </authorList>
    </citation>
    <scope>IDENTIFICATION BY MASS SPECTROMETRY [LARGE SCALE ANALYSIS]</scope>
</reference>
<reference key="9">
    <citation type="journal article" date="2009" name="Sci. Signal.">
        <title>Quantitative phosphoproteomic analysis of T cell receptor signaling reveals system-wide modulation of protein-protein interactions.</title>
        <authorList>
            <person name="Mayya V."/>
            <person name="Lundgren D.H."/>
            <person name="Hwang S.-I."/>
            <person name="Rezaul K."/>
            <person name="Wu L."/>
            <person name="Eng J.K."/>
            <person name="Rodionov V."/>
            <person name="Han D.K."/>
        </authorList>
    </citation>
    <scope>PHOSPHORYLATION [LARGE SCALE ANALYSIS] AT SER-248; SER-254 AND SER-255</scope>
    <scope>IDENTIFICATION BY MASS SPECTROMETRY [LARGE SCALE ANALYSIS]</scope>
    <source>
        <tissue>Leukemic T-cell</tissue>
    </source>
</reference>
<reference key="10">
    <citation type="journal article" date="2010" name="Sci. Signal.">
        <title>Quantitative phosphoproteomics reveals widespread full phosphorylation site occupancy during mitosis.</title>
        <authorList>
            <person name="Olsen J.V."/>
            <person name="Vermeulen M."/>
            <person name="Santamaria A."/>
            <person name="Kumar C."/>
            <person name="Miller M.L."/>
            <person name="Jensen L.J."/>
            <person name="Gnad F."/>
            <person name="Cox J."/>
            <person name="Jensen T.S."/>
            <person name="Nigg E.A."/>
            <person name="Brunak S."/>
            <person name="Mann M."/>
        </authorList>
    </citation>
    <scope>PHOSPHORYLATION [LARGE SCALE ANALYSIS] AT SER-33 AND SER-248</scope>
    <scope>IDENTIFICATION BY MASS SPECTROMETRY [LARGE SCALE ANALYSIS]</scope>
    <source>
        <tissue>Cervix carcinoma</tissue>
    </source>
</reference>
<reference key="11">
    <citation type="journal article" date="2011" name="BMC Syst. Biol.">
        <title>Initial characterization of the human central proteome.</title>
        <authorList>
            <person name="Burkard T.R."/>
            <person name="Planyavsky M."/>
            <person name="Kaupe I."/>
            <person name="Breitwieser F.P."/>
            <person name="Buerckstuemmer T."/>
            <person name="Bennett K.L."/>
            <person name="Superti-Furga G."/>
            <person name="Colinge J."/>
        </authorList>
    </citation>
    <scope>IDENTIFICATION BY MASS SPECTROMETRY [LARGE SCALE ANALYSIS]</scope>
</reference>
<reference key="12">
    <citation type="journal article" date="2011" name="Nucleic Acids Res.">
        <title>NSrp70 is a novel nuclear speckle-related protein that modulates alternative pre-mRNA splicing in vivo.</title>
        <authorList>
            <person name="Kim Y.D."/>
            <person name="Lee J.Y."/>
            <person name="Oh K.M."/>
            <person name="Araki M."/>
            <person name="Araki K."/>
            <person name="Yamamura K.I."/>
            <person name="Jun C.D."/>
        </authorList>
    </citation>
    <scope>FUNCTION</scope>
    <scope>INTERACTION WITH SRSF1 AND SRSF2</scope>
    <scope>RNA-BINDING</scope>
    <scope>MUTAGENESIS OF 536-ARG-ASP-537</scope>
    <scope>SUBCELLULAR LOCATION</scope>
    <scope>TISSUE SPECIFICITY</scope>
    <scope>INDUCTION</scope>
</reference>
<reference key="13">
    <citation type="journal article" date="2011" name="Sci. Signal.">
        <title>System-wide temporal characterization of the proteome and phosphoproteome of human embryonic stem cell differentiation.</title>
        <authorList>
            <person name="Rigbolt K.T."/>
            <person name="Prokhorova T.A."/>
            <person name="Akimov V."/>
            <person name="Henningsen J."/>
            <person name="Johansen P.T."/>
            <person name="Kratchmarova I."/>
            <person name="Kassem M."/>
            <person name="Mann M."/>
            <person name="Olsen J.V."/>
            <person name="Blagoev B."/>
        </authorList>
    </citation>
    <scope>PHOSPHORYLATION [LARGE SCALE ANALYSIS] AT SER-27; SER-33; SER-248; SER-254 AND SER-255</scope>
    <scope>IDENTIFICATION BY MASS SPECTROMETRY [LARGE SCALE ANALYSIS]</scope>
</reference>
<reference key="14">
    <citation type="journal article" date="2013" name="J. Proteome Res.">
        <title>Toward a comprehensive characterization of a human cancer cell phosphoproteome.</title>
        <authorList>
            <person name="Zhou H."/>
            <person name="Di Palma S."/>
            <person name="Preisinger C."/>
            <person name="Peng M."/>
            <person name="Polat A.N."/>
            <person name="Heck A.J."/>
            <person name="Mohammed S."/>
        </authorList>
    </citation>
    <scope>PHOSPHORYLATION [LARGE SCALE ANALYSIS] AT SER-33; SER-248 AND THR-275</scope>
    <scope>IDENTIFICATION BY MASS SPECTROMETRY [LARGE SCALE ANALYSIS]</scope>
    <source>
        <tissue>Cervix carcinoma</tissue>
        <tissue>Erythroleukemia</tissue>
    </source>
</reference>
<reference key="15">
    <citation type="journal article" date="2014" name="J. Proteomics">
        <title>An enzyme assisted RP-RPLC approach for in-depth analysis of human liver phosphoproteome.</title>
        <authorList>
            <person name="Bian Y."/>
            <person name="Song C."/>
            <person name="Cheng K."/>
            <person name="Dong M."/>
            <person name="Wang F."/>
            <person name="Huang J."/>
            <person name="Sun D."/>
            <person name="Wang L."/>
            <person name="Ye M."/>
            <person name="Zou H."/>
        </authorList>
    </citation>
    <scope>PHOSPHORYLATION [LARGE SCALE ANALYSIS] AT SER-33 AND SER-248</scope>
    <scope>IDENTIFICATION BY MASS SPECTROMETRY [LARGE SCALE ANALYSIS]</scope>
    <source>
        <tissue>Liver</tissue>
    </source>
</reference>
<reference key="16">
    <citation type="journal article" date="2014" name="Nat. Struct. Mol. Biol.">
        <title>Uncovering global SUMOylation signaling networks in a site-specific manner.</title>
        <authorList>
            <person name="Hendriks I.A."/>
            <person name="D'Souza R.C."/>
            <person name="Yang B."/>
            <person name="Verlaan-de Vries M."/>
            <person name="Mann M."/>
            <person name="Vertegaal A.C."/>
        </authorList>
    </citation>
    <scope>SUMOYLATION [LARGE SCALE ANALYSIS] AT LYS-210</scope>
    <scope>IDENTIFICATION BY MASS SPECTROMETRY [LARGE SCALE ANALYSIS]</scope>
</reference>
<reference key="17">
    <citation type="journal article" date="2017" name="Nat. Struct. Mol. Biol.">
        <title>Site-specific mapping of the human SUMO proteome reveals co-modification with phosphorylation.</title>
        <authorList>
            <person name="Hendriks I.A."/>
            <person name="Lyon D."/>
            <person name="Young C."/>
            <person name="Jensen L.J."/>
            <person name="Vertegaal A.C."/>
            <person name="Nielsen M.L."/>
        </authorList>
    </citation>
    <scope>SUMOYLATION [LARGE SCALE ANALYSIS] AT LYS-199 AND LYS-281</scope>
    <scope>IDENTIFICATION BY MASS SPECTROMETRY [LARGE SCALE ANALYSIS]</scope>
</reference>
<reference key="18">
    <citation type="journal article" date="2021" name="Genet. Med.">
        <title>Biallelic loss-of-function variants in the splicing regulator NSRP1 cause a severe neurodevelopmental disorder with spastic cerebral palsy and epilepsy.</title>
        <authorList>
            <person name="Calame D.G."/>
            <person name="Bakhtiari S."/>
            <person name="Logan R."/>
            <person name="Coban-Akdemir Z."/>
            <person name="Du H."/>
            <person name="Mitani T."/>
            <person name="Fatih J.M."/>
            <person name="Hunter J.V."/>
            <person name="Herman I."/>
            <person name="Pehlivan D."/>
            <person name="Jhangiani S.N."/>
            <person name="Person R."/>
            <person name="Schnur R.E."/>
            <person name="Jin S.C."/>
            <person name="Bilguvar K."/>
            <person name="Posey J.E."/>
            <person name="Koh S."/>
            <person name="Firouzabadi S.G."/>
            <person name="Alehabib E."/>
            <person name="Tafakhori A."/>
            <person name="Esmkhani S."/>
            <person name="Gibbs R.A."/>
            <person name="Noureldeen M.M."/>
            <person name="Zaki M.S."/>
            <person name="Marafi D."/>
            <person name="Darvish H."/>
            <person name="Kruer M.C."/>
            <person name="Lupski J.R."/>
        </authorList>
    </citation>
    <scope>VARIANT NEDSSBA 18-GLN--ASP-558 DEL</scope>
    <scope>INVOLVEMENT IN NEDSSBA</scope>
</reference>
<proteinExistence type="evidence at protein level"/>
<evidence type="ECO:0000250" key="1">
    <source>
        <dbReference type="UniProtKB" id="Q4FZU3"/>
    </source>
</evidence>
<evidence type="ECO:0000255" key="2"/>
<evidence type="ECO:0000256" key="3">
    <source>
        <dbReference type="SAM" id="MobiDB-lite"/>
    </source>
</evidence>
<evidence type="ECO:0000269" key="4">
    <source>
    </source>
</evidence>
<evidence type="ECO:0000269" key="5">
    <source>
    </source>
</evidence>
<evidence type="ECO:0000305" key="6"/>
<evidence type="ECO:0007744" key="7">
    <source>
    </source>
</evidence>
<evidence type="ECO:0007744" key="8">
    <source>
    </source>
</evidence>
<evidence type="ECO:0007744" key="9">
    <source>
    </source>
</evidence>
<evidence type="ECO:0007744" key="10">
    <source>
    </source>
</evidence>
<evidence type="ECO:0007744" key="11">
    <source>
    </source>
</evidence>
<evidence type="ECO:0007744" key="12">
    <source>
    </source>
</evidence>
<evidence type="ECO:0007744" key="13">
    <source>
    </source>
</evidence>
<evidence type="ECO:0007744" key="14">
    <source>
    </source>
</evidence>
<evidence type="ECO:0007744" key="15">
    <source>
    </source>
</evidence>
<evidence type="ECO:0007744" key="16">
    <source>
    </source>
</evidence>
<evidence type="ECO:0007744" key="17">
    <source>
    </source>
</evidence>
<comment type="function">
    <text evidence="4">RNA-binding protein that mediates pre-mRNA alternative splicing regulation.</text>
</comment>
<comment type="subunit">
    <text evidence="4">Interacts (via C-terminus) with SRSF1. Interacts (via C-terminus) with SRSF2.</text>
</comment>
<comment type="interaction">
    <interactant intactId="EBI-5464397">
        <id>Q9H0G5</id>
    </interactant>
    <interactant intactId="EBI-593303">
        <id>P78362</id>
        <label>SRPK2</label>
    </interactant>
    <organismsDiffer>false</organismsDiffer>
    <experiments>2</experiments>
</comment>
<comment type="subcellular location">
    <subcellularLocation>
        <location evidence="4">Nucleus</location>
    </subcellularLocation>
    <subcellularLocation>
        <location evidence="4">Nucleus speckle</location>
    </subcellularLocation>
    <text>Colocalizes with splicing factors SRSF1 and SRSF2 in speckles.</text>
</comment>
<comment type="tissue specificity">
    <text evidence="4">Expressed in dendritic cells, T-cells, B-cells and natural killer cells. Expressed in secondary lymphoid organs such as spleen and mesenteric, axillary and brachial lymph nodes.</text>
</comment>
<comment type="induction">
    <text evidence="4">Up-regulated in motile T-cells.</text>
</comment>
<comment type="disease" evidence="5">
    <disease id="DI-06482">
        <name>Neurodevelopmental disorder with spasticity, seizures, and brain abnormalities</name>
        <acronym>NEDSSBA</acronym>
        <description>An autosomal recessive disorder characterized by developmental delay apparent in infancy, impaired intellectual development with poor or absent speech, epilepsy, variable microcephaly, hypotonia, and spastic cerebral palsy. Brain abnormalities include simplified gyral pattern, defects of the operculum, and vermian hypoplasia. Death in early childhood may occur.</description>
        <dbReference type="MIM" id="620001"/>
    </disease>
    <text>The disease is caused by variants affecting the gene represented in this entry.</text>
</comment>
<comment type="similarity">
    <text evidence="6">Belongs to the NSRP1 family.</text>
</comment>